<organism evidence="8">
    <name type="scientific">Plasmodium falciparum (isolate 3D7)</name>
    <dbReference type="NCBI Taxonomy" id="36329"/>
    <lineage>
        <taxon>Eukaryota</taxon>
        <taxon>Sar</taxon>
        <taxon>Alveolata</taxon>
        <taxon>Apicomplexa</taxon>
        <taxon>Aconoidasida</taxon>
        <taxon>Haemosporida</taxon>
        <taxon>Plasmodiidae</taxon>
        <taxon>Plasmodium</taxon>
        <taxon>Plasmodium (Laverania)</taxon>
    </lineage>
</organism>
<protein>
    <recommendedName>
        <fullName evidence="5">Plasmepsin IX</fullName>
        <shortName evidence="5">PfPMIX</shortName>
        <ecNumber evidence="3 4">3.4.23.-</ecNumber>
    </recommendedName>
    <alternativeName>
        <fullName evidence="6">Plasmepsin 9</fullName>
    </alternativeName>
</protein>
<accession>Q8ILG2</accession>
<feature type="propeptide" id="PRO_0000453735" evidence="6">
    <location>
        <begin position="1"/>
        <end status="unknown"/>
    </location>
</feature>
<feature type="chain" id="PRO_0000453736" description="Plasmepsin IX">
    <location>
        <begin status="unknown"/>
        <end position="627"/>
    </location>
</feature>
<feature type="topological domain" description="Cytoplasmic" evidence="6">
    <location>
        <begin position="1"/>
        <end position="13"/>
    </location>
</feature>
<feature type="transmembrane region" description="Helical; Signal-anchor for type II membrane protein" evidence="1">
    <location>
        <begin position="14"/>
        <end position="34"/>
    </location>
</feature>
<feature type="topological domain" description="Lumenal" evidence="6">
    <location>
        <begin position="35"/>
        <end position="627"/>
    </location>
</feature>
<feature type="domain" description="Peptidase A1" evidence="2">
    <location>
        <begin position="228"/>
        <end position="605"/>
    </location>
</feature>
<feature type="active site" evidence="2">
    <location>
        <position position="246"/>
    </location>
</feature>
<feature type="active site" evidence="2">
    <location>
        <position position="495"/>
    </location>
</feature>
<feature type="mutagenesis site" description="Loss of catalytic activity." evidence="3">
    <original>D</original>
    <variation>A</variation>
    <location>
        <position position="246"/>
    </location>
</feature>
<dbReference type="EC" id="3.4.23.-" evidence="3 4"/>
<dbReference type="EMBL" id="LN999946">
    <property type="protein sequence ID" value="CZT99999.1"/>
    <property type="molecule type" value="Genomic_DNA"/>
</dbReference>
<dbReference type="RefSeq" id="XP_001348455.1">
    <property type="nucleotide sequence ID" value="XM_001348419.1"/>
</dbReference>
<dbReference type="SMR" id="Q8ILG2"/>
<dbReference type="FunCoup" id="Q8ILG2">
    <property type="interactions" value="1"/>
</dbReference>
<dbReference type="STRING" id="36329.Q8ILG2"/>
<dbReference type="BindingDB" id="Q8ILG2"/>
<dbReference type="ChEMBL" id="CHEMBL5169236"/>
<dbReference type="MEROPS" id="A01.A95"/>
<dbReference type="PaxDb" id="5833-PF14_0281"/>
<dbReference type="EnsemblProtists" id="CZT99999">
    <property type="protein sequence ID" value="CZT99999"/>
    <property type="gene ID" value="PF3D7_1430200"/>
</dbReference>
<dbReference type="GeneID" id="811863"/>
<dbReference type="KEGG" id="pfa:PF3D7_1430200"/>
<dbReference type="VEuPathDB" id="PlasmoDB:PF3D7_1430200"/>
<dbReference type="HOGENOM" id="CLU_395639_0_0_1"/>
<dbReference type="InParanoid" id="Q8ILG2"/>
<dbReference type="OMA" id="HQKFCCD"/>
<dbReference type="OrthoDB" id="771136at2759"/>
<dbReference type="PhylomeDB" id="Q8ILG2"/>
<dbReference type="Reactome" id="R-PFA-2132295">
    <property type="pathway name" value="MHC class II antigen presentation"/>
</dbReference>
<dbReference type="Reactome" id="R-PFA-6798695">
    <property type="pathway name" value="Neutrophil degranulation"/>
</dbReference>
<dbReference type="Proteomes" id="UP000001450">
    <property type="component" value="Chromosome 14"/>
</dbReference>
<dbReference type="GO" id="GO:0031410">
    <property type="term" value="C:cytoplasmic vesicle"/>
    <property type="evidence" value="ECO:0007669"/>
    <property type="project" value="UniProtKB-KW"/>
</dbReference>
<dbReference type="GO" id="GO:0005764">
    <property type="term" value="C:lysosome"/>
    <property type="evidence" value="ECO:0000318"/>
    <property type="project" value="GO_Central"/>
</dbReference>
<dbReference type="GO" id="GO:0016020">
    <property type="term" value="C:membrane"/>
    <property type="evidence" value="ECO:0007669"/>
    <property type="project" value="UniProtKB-SubCell"/>
</dbReference>
<dbReference type="GO" id="GO:0020008">
    <property type="term" value="C:rhoptry"/>
    <property type="evidence" value="ECO:0000314"/>
    <property type="project" value="UniProtKB"/>
</dbReference>
<dbReference type="GO" id="GO:0004190">
    <property type="term" value="F:aspartic-type endopeptidase activity"/>
    <property type="evidence" value="ECO:0000315"/>
    <property type="project" value="UniProtKB"/>
</dbReference>
<dbReference type="GO" id="GO:0085017">
    <property type="term" value="P:entry into host cell by a symbiont-containing vacuole"/>
    <property type="evidence" value="ECO:0000315"/>
    <property type="project" value="UniProtKB"/>
</dbReference>
<dbReference type="GO" id="GO:0016540">
    <property type="term" value="P:protein autoprocessing"/>
    <property type="evidence" value="ECO:0000315"/>
    <property type="project" value="UniProtKB"/>
</dbReference>
<dbReference type="GO" id="GO:0016485">
    <property type="term" value="P:protein processing"/>
    <property type="evidence" value="ECO:0000315"/>
    <property type="project" value="UniProtKB"/>
</dbReference>
<dbReference type="GO" id="GO:0006508">
    <property type="term" value="P:proteolysis"/>
    <property type="evidence" value="ECO:0000250"/>
    <property type="project" value="GeneDB"/>
</dbReference>
<dbReference type="CDD" id="cd05471">
    <property type="entry name" value="pepsin_like"/>
    <property type="match status" value="1"/>
</dbReference>
<dbReference type="FunFam" id="2.40.70.10:FF:000115">
    <property type="entry name" value="Lysosomal aspartic protease"/>
    <property type="match status" value="1"/>
</dbReference>
<dbReference type="FunFam" id="2.40.70.10:FF:000128">
    <property type="entry name" value="Plasmepsin IX"/>
    <property type="match status" value="1"/>
</dbReference>
<dbReference type="Gene3D" id="2.40.70.10">
    <property type="entry name" value="Acid Proteases"/>
    <property type="match status" value="3"/>
</dbReference>
<dbReference type="InterPro" id="IPR001461">
    <property type="entry name" value="Aspartic_peptidase_A1"/>
</dbReference>
<dbReference type="InterPro" id="IPR034164">
    <property type="entry name" value="Pepsin-like_dom"/>
</dbReference>
<dbReference type="InterPro" id="IPR033121">
    <property type="entry name" value="PEPTIDASE_A1"/>
</dbReference>
<dbReference type="InterPro" id="IPR021109">
    <property type="entry name" value="Peptidase_aspartic_dom_sf"/>
</dbReference>
<dbReference type="PANTHER" id="PTHR47966">
    <property type="entry name" value="BETA-SITE APP-CLEAVING ENZYME, ISOFORM A-RELATED"/>
    <property type="match status" value="1"/>
</dbReference>
<dbReference type="PANTHER" id="PTHR47966:SF51">
    <property type="entry name" value="BETA-SITE APP-CLEAVING ENZYME, ISOFORM A-RELATED"/>
    <property type="match status" value="1"/>
</dbReference>
<dbReference type="Pfam" id="PF00026">
    <property type="entry name" value="Asp"/>
    <property type="match status" value="2"/>
</dbReference>
<dbReference type="PRINTS" id="PR00792">
    <property type="entry name" value="PEPSIN"/>
</dbReference>
<dbReference type="SUPFAM" id="SSF50630">
    <property type="entry name" value="Acid proteases"/>
    <property type="match status" value="1"/>
</dbReference>
<dbReference type="PROSITE" id="PS00141">
    <property type="entry name" value="ASP_PROTEASE"/>
    <property type="match status" value="1"/>
</dbReference>
<dbReference type="PROSITE" id="PS51767">
    <property type="entry name" value="PEPTIDASE_A1"/>
    <property type="match status" value="1"/>
</dbReference>
<evidence type="ECO:0000255" key="1"/>
<evidence type="ECO:0000255" key="2">
    <source>
        <dbReference type="PROSITE-ProRule" id="PRU01103"/>
    </source>
</evidence>
<evidence type="ECO:0000269" key="3">
    <source>
    </source>
</evidence>
<evidence type="ECO:0000269" key="4">
    <source>
    </source>
</evidence>
<evidence type="ECO:0000303" key="5">
    <source>
    </source>
</evidence>
<evidence type="ECO:0000305" key="6"/>
<evidence type="ECO:0000312" key="7">
    <source>
        <dbReference type="EMBL" id="CZT99999.1"/>
    </source>
</evidence>
<evidence type="ECO:0000312" key="8">
    <source>
        <dbReference type="Proteomes" id="UP000001450"/>
    </source>
</evidence>
<gene>
    <name evidence="5" type="primary">PMIX</name>
    <name evidence="7" type="ORF">PF3D7_1430200</name>
</gene>
<proteinExistence type="evidence at protein level"/>
<name>PLM9_PLAF7</name>
<sequence length="627" mass="74183">MFFINFKKIKKKQFPIYLTQHRIITVFLIFIYFINLKDCFHINNSRILSDVDKHRGLYYNIPKCNVCHKCSICTHENGEAQNVIPMVAIPSKRKHIQDINKEREENKYPLHIFEEKDIYNNKDNVVKKEDIYKLRKKKKQKKNCLNFLEKDTMFLSPSHDKETFHINHMNKIKDEKYKQEYEEEKEIYDNTNTSQEKNETNNEQNLNINLINNDKVTLPLQQLEDSQYVGYIQIGTPPQTIRPIFDTGSTNIWIVSTKCKDETCLKVHRYNHKLSSSFKYYEPHTNLDIMFGTGIIQGVIGVETFKIGPFEIKNQSFGLVKREKASDNKSNVFERINFEGIVGLAFPEMLSTGKSTLYENLMSSYKLQHNEFSIYIGKDSKYSALIFGGVDKNFFEGDIYMFPVVKEYYWEIHFDGLYIDHQKFCCGVNSIVYDLKKKDQENNKLFFTRKYFRKNKFKTHLRKYLLKKIKHQKKQKHSNHKKKKLNKKKNYLIFDSGTSFNSVPKDEIEYFFRVVPSKKCDDSNIDQVVSSYPNLTYVINKMPFTLTPSQYLVRKNDMCKPAFMEIEVSSEYGHAYILGNATFMRYYYTVYRRGNNNNSSYVGIAKAVHTEENEKYLSSLHNKINNL</sequence>
<reference evidence="8" key="1">
    <citation type="journal article" date="2002" name="Nature">
        <title>Genome sequence of the human malaria parasite Plasmodium falciparum.</title>
        <authorList>
            <person name="Gardner M.J."/>
            <person name="Hall N."/>
            <person name="Fung E."/>
            <person name="White O."/>
            <person name="Berriman M."/>
            <person name="Hyman R.W."/>
            <person name="Carlton J.M."/>
            <person name="Pain A."/>
            <person name="Nelson K.E."/>
            <person name="Bowman S."/>
            <person name="Paulsen I.T."/>
            <person name="James K.D."/>
            <person name="Eisen J.A."/>
            <person name="Rutherford K.M."/>
            <person name="Salzberg S.L."/>
            <person name="Craig A."/>
            <person name="Kyes S."/>
            <person name="Chan M.-S."/>
            <person name="Nene V."/>
            <person name="Shallom S.J."/>
            <person name="Suh B."/>
            <person name="Peterson J."/>
            <person name="Angiuoli S."/>
            <person name="Pertea M."/>
            <person name="Allen J."/>
            <person name="Selengut J."/>
            <person name="Haft D."/>
            <person name="Mather M.W."/>
            <person name="Vaidya A.B."/>
            <person name="Martin D.M.A."/>
            <person name="Fairlamb A.H."/>
            <person name="Fraunholz M.J."/>
            <person name="Roos D.S."/>
            <person name="Ralph S.A."/>
            <person name="McFadden G.I."/>
            <person name="Cummings L.M."/>
            <person name="Subramanian G.M."/>
            <person name="Mungall C."/>
            <person name="Venter J.C."/>
            <person name="Carucci D.J."/>
            <person name="Hoffman S.L."/>
            <person name="Newbold C."/>
            <person name="Davis R.W."/>
            <person name="Fraser C.M."/>
            <person name="Barrell B.G."/>
        </authorList>
    </citation>
    <scope>NUCLEOTIDE SEQUENCE [LARGE SCALE GENOMIC DNA]</scope>
    <source>
        <strain evidence="8">3D7</strain>
    </source>
</reference>
<reference evidence="6" key="2">
    <citation type="journal article" date="2017" name="Science">
        <title>A multistage antimalarial targets the plasmepsins IX and X essential for invasion and egress.</title>
        <authorList>
            <person name="Pino P."/>
            <person name="Caldelari R."/>
            <person name="Mukherjee B."/>
            <person name="Vahokoski J."/>
            <person name="Klages N."/>
            <person name="Maco B."/>
            <person name="Collins C.R."/>
            <person name="Blackman M.J."/>
            <person name="Kursula I."/>
            <person name="Heussler V."/>
            <person name="Brochet M."/>
            <person name="Soldati-Favre D."/>
        </authorList>
    </citation>
    <scope>FUNCTION</scope>
    <scope>CATALYTIC ACTIVITY</scope>
    <scope>ACTIVITY REGULATION</scope>
    <scope>SUBCELLULAR LOCATION</scope>
    <scope>DEVELOPMENTAL STAGE</scope>
    <scope>DISRUPTION PHENOTYPE</scope>
    <scope>MUTAGENESIS OF ASP-246</scope>
</reference>
<reference evidence="6" key="3">
    <citation type="journal article" date="2020" name="Cell Host Microbe">
        <title>Dual Plasmepsin-Targeting Antimalarial Agents Disrupt Multiple Stages of the Malaria Parasite Life Cycle.</title>
        <authorList>
            <person name="Favuzza P."/>
            <person name="de Lera Ruiz M."/>
            <person name="Thompson J.K."/>
            <person name="Triglia T."/>
            <person name="Ngo A."/>
            <person name="Steel R.W.J."/>
            <person name="Vavrek M."/>
            <person name="Christensen J."/>
            <person name="Healer J."/>
            <person name="Boyce C."/>
            <person name="Guo Z."/>
            <person name="Hu M."/>
            <person name="Khan T."/>
            <person name="Murgolo N."/>
            <person name="Zhao L."/>
            <person name="Penington J.S."/>
            <person name="Reaksudsan K."/>
            <person name="Jarman K."/>
            <person name="Dietrich M.H."/>
            <person name="Richardson L."/>
            <person name="Guo K.Y."/>
            <person name="Lopaticki S."/>
            <person name="Tham W.H."/>
            <person name="Rottmann M."/>
            <person name="Papenfuss T."/>
            <person name="Robbins J.A."/>
            <person name="Boddey J.A."/>
            <person name="Sleebs B.E."/>
            <person name="Sabroux H.J."/>
            <person name="McCauley J.A."/>
            <person name="Olsen D.B."/>
            <person name="Cowman A.F."/>
        </authorList>
    </citation>
    <scope>FUNCTION</scope>
    <scope>CATALYTIC ACTIVITY</scope>
    <scope>ACTIVITY REGULATION</scope>
    <scope>PROTEOLYTIC CLEAVAGE</scope>
</reference>
<comment type="function">
    <text evidence="3 4">During the asexual blood stage, initiates the proteolytic maturation of several rhoptry proteins and thus, is required for merozoite invasion of host erythrocytes and probably the subsequent development of the ring-stage (PubMed:29074775, PubMed:32109369). Cleaves rhoptry associated protein 1 RAP1 and apical sushi protein ASP during schizont maturation (PubMed:29074775, PubMed:32109369). Also cleaves rhoptry protein RON3 (PubMed:32109369).</text>
</comment>
<comment type="activity regulation">
    <text evidence="3 4">Inhibited by small molecule 49c (PubMed:29074775). Inhibited by small molecule WM382 (PubMed:32109369).</text>
</comment>
<comment type="subcellular location">
    <subcellularLocation>
        <location evidence="1">Membrane</location>
        <topology evidence="6">Single-pass type II membrane protein</topology>
    </subcellularLocation>
    <subcellularLocation>
        <location evidence="3">Cytoplasmic vesicle</location>
        <location evidence="3">Secretory vesicle</location>
        <location evidence="3">Rhoptry</location>
    </subcellularLocation>
    <text evidence="3">In schizonts, localizes to the bulb of rhoptries.</text>
</comment>
<comment type="developmental stage">
    <text evidence="3">Expressed during the asexual blood stage, in schizonts and free merozoites (at protein level).</text>
</comment>
<comment type="PTM">
    <text evidence="4">Autocleaved into a p55 mature form.</text>
</comment>
<comment type="disruption phenotype">
    <text evidence="3">Normal asexual development in host erythrocytes (PubMed:29074775). Egress from erythrocytes is normal; however, subsequent erythrocyte invasion by newly released merozoites is severely impaired (PubMed:29074775). Accumulation of RAP1 p86 precursor resulting from impaired processing (PubMed:29074775). Impaired ASP processing (PubMed:29074775). Impaired secretion of CyRPA during merozoite egress from erythrocytes (PubMed:29074775).</text>
</comment>
<comment type="similarity">
    <text evidence="6">Belongs to the peptidase A1 family.</text>
</comment>
<comment type="caution">
    <text evidence="6">It is unclear if PMIX is glycosylated as other members of the same enzyme family, i.e. PMI and PMII, are not.</text>
</comment>
<keyword id="KW-0064">Aspartyl protease</keyword>
<keyword id="KW-0968">Cytoplasmic vesicle</keyword>
<keyword id="KW-0378">Hydrolase</keyword>
<keyword id="KW-0472">Membrane</keyword>
<keyword id="KW-0645">Protease</keyword>
<keyword id="KW-1185">Reference proteome</keyword>
<keyword id="KW-0735">Signal-anchor</keyword>
<keyword id="KW-0812">Transmembrane</keyword>
<keyword id="KW-1133">Transmembrane helix</keyword>
<keyword id="KW-0865">Zymogen</keyword>